<sequence>MGLSADLFVQKRSAASSLKQPKELGFYSKTQEGQFLVNDSSKLSYYYLPDTELERNLDLCSGIKKFKECFGNPDVDACTLSGLLKTIQAYEERKNKKVPADIITFRGIMRKLISAAFDSPKYNRVDLRVLSFNGQLFIREPNQAHPPPANTSSMEYRSYYSGYKFETLSTISKPLPQVTRNSLEKRHKRICCNGDQYITVVRSGVGHCKLVLGAEVDCVFDFTEDSSDNLKHYAELKCTKGVSTFAEARAFERKMFKTWLQCFLVGINRVIYGFRDENFILRSVEEYSTQEVPLLLKNNNPQLTNACMDAVRWYGALTEWLLSSIPREESAEHIRAYRLTFENNHLKLVEIEKSDTEYDQLVNGEGILTSEFREWRKSLNKSL</sequence>
<reference key="1">
    <citation type="journal article" date="2009" name="Genome Res.">
        <title>Comparative genomics of protoploid Saccharomycetaceae.</title>
        <authorList>
            <consortium name="The Genolevures Consortium"/>
            <person name="Souciet J.-L."/>
            <person name="Dujon B."/>
            <person name="Gaillardin C."/>
            <person name="Johnston M."/>
            <person name="Baret P.V."/>
            <person name="Cliften P."/>
            <person name="Sherman D.J."/>
            <person name="Weissenbach J."/>
            <person name="Westhof E."/>
            <person name="Wincker P."/>
            <person name="Jubin C."/>
            <person name="Poulain J."/>
            <person name="Barbe V."/>
            <person name="Segurens B."/>
            <person name="Artiguenave F."/>
            <person name="Anthouard V."/>
            <person name="Vacherie B."/>
            <person name="Val M.-E."/>
            <person name="Fulton R.S."/>
            <person name="Minx P."/>
            <person name="Wilson R."/>
            <person name="Durrens P."/>
            <person name="Jean G."/>
            <person name="Marck C."/>
            <person name="Martin T."/>
            <person name="Nikolski M."/>
            <person name="Rolland T."/>
            <person name="Seret M.-L."/>
            <person name="Casaregola S."/>
            <person name="Despons L."/>
            <person name="Fairhead C."/>
            <person name="Fischer G."/>
            <person name="Lafontaine I."/>
            <person name="Leh V."/>
            <person name="Lemaire M."/>
            <person name="de Montigny J."/>
            <person name="Neuveglise C."/>
            <person name="Thierry A."/>
            <person name="Blanc-Lenfle I."/>
            <person name="Bleykasten C."/>
            <person name="Diffels J."/>
            <person name="Fritsch E."/>
            <person name="Frangeul L."/>
            <person name="Goeffon A."/>
            <person name="Jauniaux N."/>
            <person name="Kachouri-Lafond R."/>
            <person name="Payen C."/>
            <person name="Potier S."/>
            <person name="Pribylova L."/>
            <person name="Ozanne C."/>
            <person name="Richard G.-F."/>
            <person name="Sacerdot C."/>
            <person name="Straub M.-L."/>
            <person name="Talla E."/>
        </authorList>
    </citation>
    <scope>NUCLEOTIDE SEQUENCE [LARGE SCALE GENOMIC DNA]</scope>
    <source>
        <strain>ATCC 56472 / CBS 6340 / NRRL Y-8284</strain>
    </source>
</reference>
<reference key="2">
    <citation type="journal article" date="2015" name="Nucleic Acids Res.">
        <title>Structural and biochemical studies of the distinct activity profiles of Rai1 enzymes.</title>
        <authorList>
            <person name="Wang V.Y."/>
            <person name="Jiao X."/>
            <person name="Kiledjian M."/>
            <person name="Tong L."/>
        </authorList>
    </citation>
    <scope>FUNCTION</scope>
</reference>
<dbReference type="EC" id="3.6.1.-" evidence="6 1"/>
<dbReference type="EMBL" id="CU928171">
    <property type="protein sequence ID" value="CAR24631.1"/>
    <property type="molecule type" value="Genomic_DNA"/>
</dbReference>
<dbReference type="RefSeq" id="XP_002555068.1">
    <property type="nucleotide sequence ID" value="XM_002555022.1"/>
</dbReference>
<dbReference type="SMR" id="C5DLH0"/>
<dbReference type="FunCoup" id="C5DLH0">
    <property type="interactions" value="677"/>
</dbReference>
<dbReference type="STRING" id="559295.C5DLH0"/>
<dbReference type="GeneID" id="8293326"/>
<dbReference type="KEGG" id="lth:KLTH0G00660g"/>
<dbReference type="eggNOG" id="KOG1982">
    <property type="taxonomic scope" value="Eukaryota"/>
</dbReference>
<dbReference type="HOGENOM" id="CLU_024877_4_1_1"/>
<dbReference type="InParanoid" id="C5DLH0"/>
<dbReference type="OMA" id="VVTWRGH"/>
<dbReference type="OrthoDB" id="5853397at2759"/>
<dbReference type="Proteomes" id="UP000002036">
    <property type="component" value="Chromosome G"/>
</dbReference>
<dbReference type="GO" id="GO:0005829">
    <property type="term" value="C:cytosol"/>
    <property type="evidence" value="ECO:0007669"/>
    <property type="project" value="TreeGrafter"/>
</dbReference>
<dbReference type="GO" id="GO:0005634">
    <property type="term" value="C:nucleus"/>
    <property type="evidence" value="ECO:0007669"/>
    <property type="project" value="UniProtKB-SubCell"/>
</dbReference>
<dbReference type="GO" id="GO:0046872">
    <property type="term" value="F:metal ion binding"/>
    <property type="evidence" value="ECO:0007669"/>
    <property type="project" value="UniProtKB-KW"/>
</dbReference>
<dbReference type="GO" id="GO:0034353">
    <property type="term" value="F:mRNA 5'-diphosphatase activity"/>
    <property type="evidence" value="ECO:0007669"/>
    <property type="project" value="TreeGrafter"/>
</dbReference>
<dbReference type="GO" id="GO:0004518">
    <property type="term" value="F:nuclease activity"/>
    <property type="evidence" value="ECO:0007669"/>
    <property type="project" value="UniProtKB-KW"/>
</dbReference>
<dbReference type="GO" id="GO:0000166">
    <property type="term" value="F:nucleotide binding"/>
    <property type="evidence" value="ECO:0007669"/>
    <property type="project" value="UniProtKB-KW"/>
</dbReference>
<dbReference type="GO" id="GO:0003723">
    <property type="term" value="F:RNA binding"/>
    <property type="evidence" value="ECO:0007669"/>
    <property type="project" value="UniProtKB-KW"/>
</dbReference>
<dbReference type="GO" id="GO:0006397">
    <property type="term" value="P:mRNA processing"/>
    <property type="evidence" value="ECO:0007669"/>
    <property type="project" value="UniProtKB-KW"/>
</dbReference>
<dbReference type="GO" id="GO:0110155">
    <property type="term" value="P:NAD-cap decapping"/>
    <property type="evidence" value="ECO:0007669"/>
    <property type="project" value="TreeGrafter"/>
</dbReference>
<dbReference type="GO" id="GO:0000956">
    <property type="term" value="P:nuclear-transcribed mRNA catabolic process"/>
    <property type="evidence" value="ECO:0007669"/>
    <property type="project" value="TreeGrafter"/>
</dbReference>
<dbReference type="InterPro" id="IPR013961">
    <property type="entry name" value="RAI1"/>
</dbReference>
<dbReference type="InterPro" id="IPR039039">
    <property type="entry name" value="RAI1-like_fam"/>
</dbReference>
<dbReference type="PANTHER" id="PTHR12395:SF9">
    <property type="entry name" value="DECAPPING AND EXORIBONUCLEASE PROTEIN"/>
    <property type="match status" value="1"/>
</dbReference>
<dbReference type="PANTHER" id="PTHR12395">
    <property type="entry name" value="DOM-3 RELATED"/>
    <property type="match status" value="1"/>
</dbReference>
<dbReference type="Pfam" id="PF08652">
    <property type="entry name" value="RAI1"/>
    <property type="match status" value="1"/>
</dbReference>
<keyword id="KW-0378">Hydrolase</keyword>
<keyword id="KW-0479">Metal-binding</keyword>
<keyword id="KW-0507">mRNA processing</keyword>
<keyword id="KW-0540">Nuclease</keyword>
<keyword id="KW-0547">Nucleotide-binding</keyword>
<keyword id="KW-0539">Nucleus</keyword>
<keyword id="KW-1185">Reference proteome</keyword>
<keyword id="KW-0694">RNA-binding</keyword>
<feature type="chain" id="PRO_0000451695" description="Decapping nuclease RAI1">
    <location>
        <begin position="1"/>
        <end position="383"/>
    </location>
</feature>
<feature type="binding site" evidence="5">
    <location>
        <position position="166"/>
    </location>
    <ligand>
        <name>a divalent metal cation</name>
        <dbReference type="ChEBI" id="CHEBI:60240"/>
    </ligand>
</feature>
<feature type="binding site" evidence="2">
    <location>
        <position position="215"/>
    </location>
    <ligand>
        <name>substrate</name>
    </ligand>
</feature>
<feature type="binding site" evidence="5">
    <location>
        <position position="217"/>
    </location>
    <ligand>
        <name>a divalent metal cation</name>
        <dbReference type="ChEBI" id="CHEBI:60240"/>
    </ligand>
</feature>
<feature type="binding site" evidence="5">
    <location>
        <position position="235"/>
    </location>
    <ligand>
        <name>a divalent metal cation</name>
        <dbReference type="ChEBI" id="CHEBI:60240"/>
    </ligand>
</feature>
<feature type="binding site" evidence="5">
    <location>
        <position position="236"/>
    </location>
    <ligand>
        <name>a divalent metal cation</name>
        <dbReference type="ChEBI" id="CHEBI:60240"/>
    </ligand>
</feature>
<feature type="binding site" evidence="2">
    <location>
        <position position="237"/>
    </location>
    <ligand>
        <name>substrate</name>
    </ligand>
</feature>
<feature type="binding site" evidence="2">
    <location>
        <position position="261"/>
    </location>
    <ligand>
        <name>substrate</name>
    </ligand>
</feature>
<comment type="function">
    <text evidence="1 2 4 6">Decapping enzyme for NAD-capped RNAs: specifically hydrolyzes the nicotinamide adenine dinucleotide (NAD) cap from a subset of RNAs by removing the entire NAD moiety from the 5'-end of an NAD-capped RNA (By similarity). The NAD-cap is present at the 5'-end of some RNAs and snoRNAs. In contrast to the canonical 5'-end N7 methylguanosine (m7G) cap, the NAD cap promotes mRNA decay (By similarity). Also acts as a non-canonical decapping enzyme that removes the entire cap structure of m7G capped or incompletely capped RNAs (PubMed:26101253). Has decapping activity toward incomplete 5'-end m7G cap mRNAs such as unmethylated 5'-end-capped RNA (cap0), while it has no activity toward 2'-O-ribose methylated m7G cap (cap1) (By similarity). Also possesses RNA 5'-pyrophosphohydrolase activity by hydrolyzing the 5'-end triphosphate to release pyrophosphates (By similarity). Stimulates exoribonuclease activity of Rat1, allowing it to degrade RNAs with stable secondary structure more effectively (By similarity).</text>
</comment>
<comment type="catalytic activity">
    <reaction evidence="1">
        <text>a 5'-end NAD(+)-phospho-ribonucleoside in mRNA + H2O = a 5'-end phospho-ribonucleoside in mRNA + NAD(+) + H(+)</text>
        <dbReference type="Rhea" id="RHEA:60880"/>
        <dbReference type="Rhea" id="RHEA-COMP:15692"/>
        <dbReference type="Rhea" id="RHEA-COMP:15698"/>
        <dbReference type="ChEBI" id="CHEBI:15377"/>
        <dbReference type="ChEBI" id="CHEBI:15378"/>
        <dbReference type="ChEBI" id="CHEBI:57540"/>
        <dbReference type="ChEBI" id="CHEBI:138282"/>
        <dbReference type="ChEBI" id="CHEBI:144029"/>
    </reaction>
    <physiologicalReaction direction="left-to-right" evidence="1">
        <dbReference type="Rhea" id="RHEA:60881"/>
    </physiologicalReaction>
</comment>
<comment type="catalytic activity">
    <reaction evidence="3">
        <text>a 5'-end (N(7)-methyl 5'-triphosphoguanosine)-ribonucleoside-ribonucleotide in mRNA + H2O = a (N(7)-methyl 5'-triphosphoguanosine)-nucleoside + a 5'-end phospho-ribonucleoside in mRNA + H(+)</text>
        <dbReference type="Rhea" id="RHEA:66928"/>
        <dbReference type="Rhea" id="RHEA-COMP:15692"/>
        <dbReference type="Rhea" id="RHEA-COMP:17313"/>
        <dbReference type="ChEBI" id="CHEBI:15377"/>
        <dbReference type="ChEBI" id="CHEBI:15378"/>
        <dbReference type="ChEBI" id="CHEBI:138282"/>
        <dbReference type="ChEBI" id="CHEBI:172876"/>
        <dbReference type="ChEBI" id="CHEBI:172877"/>
    </reaction>
    <physiologicalReaction direction="left-to-right" evidence="3">
        <dbReference type="Rhea" id="RHEA:66929"/>
    </physiologicalReaction>
</comment>
<comment type="catalytic activity">
    <reaction evidence="1">
        <text>a 5'-end triphospho-ribonucleoside in mRNA + H2O = a 5'-end phospho-ribonucleoside in mRNA + diphosphate + H(+)</text>
        <dbReference type="Rhea" id="RHEA:78683"/>
        <dbReference type="Rhea" id="RHEA-COMP:15692"/>
        <dbReference type="Rhea" id="RHEA-COMP:17164"/>
        <dbReference type="ChEBI" id="CHEBI:15377"/>
        <dbReference type="ChEBI" id="CHEBI:15378"/>
        <dbReference type="ChEBI" id="CHEBI:33019"/>
        <dbReference type="ChEBI" id="CHEBI:138282"/>
        <dbReference type="ChEBI" id="CHEBI:167618"/>
    </reaction>
    <physiologicalReaction direction="left-to-right" evidence="1">
        <dbReference type="Rhea" id="RHEA:78684"/>
    </physiologicalReaction>
</comment>
<comment type="cofactor">
    <cofactor evidence="6">
        <name>a divalent metal cation</name>
        <dbReference type="ChEBI" id="CHEBI:60240"/>
    </cofactor>
    <text evidence="6">Divalent metal cation.</text>
</comment>
<comment type="subunit">
    <text evidence="1">Interacts with RAT1; the interaction is direct, stabilizes RAT1 protein structure and stimulates its exoribonuclease activity (By similarity). The interaction also stimulates RAI1 pyrophosphohydrolase activity, probably by recruiting it to mRNA substrates (By similarity).</text>
</comment>
<comment type="subcellular location">
    <subcellularLocation>
        <location evidence="3">Nucleus</location>
    </subcellularLocation>
</comment>
<comment type="similarity">
    <text evidence="8">Belongs to the DXO/Dom3Z family.</text>
</comment>
<organism>
    <name type="scientific">Lachancea thermotolerans (strain ATCC 56472 / CBS 6340 / NRRL Y-8284)</name>
    <name type="common">Yeast</name>
    <name type="synonym">Kluyveromyces thermotolerans</name>
    <dbReference type="NCBI Taxonomy" id="559295"/>
    <lineage>
        <taxon>Eukaryota</taxon>
        <taxon>Fungi</taxon>
        <taxon>Dikarya</taxon>
        <taxon>Ascomycota</taxon>
        <taxon>Saccharomycotina</taxon>
        <taxon>Saccharomycetes</taxon>
        <taxon>Saccharomycetales</taxon>
        <taxon>Saccharomycetaceae</taxon>
        <taxon>Lachancea</taxon>
    </lineage>
</organism>
<accession>C5DLH0</accession>
<protein>
    <recommendedName>
        <fullName evidence="8">Decapping nuclease RAI1</fullName>
        <shortName evidence="7">LtRai1</shortName>
        <ecNumber evidence="6">3.6.1.-</ecNumber>
    </recommendedName>
    <alternativeName>
        <fullName evidence="8">NAD-capped RNA hydrolase RAI1</fullName>
        <shortName evidence="8">DeNADding enzyme RAI1</shortName>
        <ecNumber evidence="1">3.6.1.-</ecNumber>
    </alternativeName>
</protein>
<proteinExistence type="inferred from homology"/>
<evidence type="ECO:0000250" key="1">
    <source>
        <dbReference type="UniProtKB" id="O13836"/>
    </source>
</evidence>
<evidence type="ECO:0000250" key="2">
    <source>
        <dbReference type="UniProtKB" id="O70348"/>
    </source>
</evidence>
<evidence type="ECO:0000250" key="3">
    <source>
        <dbReference type="UniProtKB" id="P53063"/>
    </source>
</evidence>
<evidence type="ECO:0000250" key="4">
    <source>
        <dbReference type="UniProtKB" id="Q06349"/>
    </source>
</evidence>
<evidence type="ECO:0000250" key="5">
    <source>
        <dbReference type="UniProtKB" id="Q5AAT0"/>
    </source>
</evidence>
<evidence type="ECO:0000269" key="6">
    <source>
    </source>
</evidence>
<evidence type="ECO:0000303" key="7">
    <source>
    </source>
</evidence>
<evidence type="ECO:0000305" key="8"/>
<evidence type="ECO:0000312" key="9">
    <source>
        <dbReference type="EMBL" id="CAR24631.1"/>
    </source>
</evidence>
<gene>
    <name evidence="7" type="primary">RAI1</name>
    <name evidence="9" type="ordered locus">KLTH0G00660g</name>
</gene>
<name>DXO_LACTC</name>